<gene>
    <name evidence="1" type="primary">rraB</name>
    <name type="ordered locus">PMI3458</name>
</gene>
<keyword id="KW-0963">Cytoplasm</keyword>
<keyword id="KW-1185">Reference proteome</keyword>
<reference key="1">
    <citation type="journal article" date="2008" name="J. Bacteriol.">
        <title>Complete genome sequence of uropathogenic Proteus mirabilis, a master of both adherence and motility.</title>
        <authorList>
            <person name="Pearson M.M."/>
            <person name="Sebaihia M."/>
            <person name="Churcher C."/>
            <person name="Quail M.A."/>
            <person name="Seshasayee A.S."/>
            <person name="Luscombe N.M."/>
            <person name="Abdellah Z."/>
            <person name="Arrosmith C."/>
            <person name="Atkin B."/>
            <person name="Chillingworth T."/>
            <person name="Hauser H."/>
            <person name="Jagels K."/>
            <person name="Moule S."/>
            <person name="Mungall K."/>
            <person name="Norbertczak H."/>
            <person name="Rabbinowitsch E."/>
            <person name="Walker D."/>
            <person name="Whithead S."/>
            <person name="Thomson N.R."/>
            <person name="Rather P.N."/>
            <person name="Parkhill J."/>
            <person name="Mobley H.L.T."/>
        </authorList>
    </citation>
    <scope>NUCLEOTIDE SEQUENCE [LARGE SCALE GENOMIC DNA]</scope>
    <source>
        <strain>HI4320</strain>
    </source>
</reference>
<evidence type="ECO:0000255" key="1">
    <source>
        <dbReference type="HAMAP-Rule" id="MF_01888"/>
    </source>
</evidence>
<evidence type="ECO:0000256" key="2">
    <source>
        <dbReference type="SAM" id="MobiDB-lite"/>
    </source>
</evidence>
<accession>B4F2M5</accession>
<proteinExistence type="inferred from homology"/>
<feature type="chain" id="PRO_0000404311" description="Regulator of ribonuclease activity B">
    <location>
        <begin position="1"/>
        <end position="143"/>
    </location>
</feature>
<feature type="region of interest" description="Disordered" evidence="2">
    <location>
        <begin position="117"/>
        <end position="143"/>
    </location>
</feature>
<feature type="compositionally biased region" description="Acidic residues" evidence="2">
    <location>
        <begin position="117"/>
        <end position="135"/>
    </location>
</feature>
<organism>
    <name type="scientific">Proteus mirabilis (strain HI4320)</name>
    <dbReference type="NCBI Taxonomy" id="529507"/>
    <lineage>
        <taxon>Bacteria</taxon>
        <taxon>Pseudomonadati</taxon>
        <taxon>Pseudomonadota</taxon>
        <taxon>Gammaproteobacteria</taxon>
        <taxon>Enterobacterales</taxon>
        <taxon>Morganellaceae</taxon>
        <taxon>Proteus</taxon>
    </lineage>
</organism>
<comment type="function">
    <text evidence="1">Globally modulates RNA abundance by binding to RNase E (Rne) and regulating its endonucleolytic activity. Can modulate Rne action in a substrate-dependent manner by altering the composition of the degradosome.</text>
</comment>
<comment type="subunit">
    <text evidence="1">Interacts with the C-terminal region of Rne.</text>
</comment>
<comment type="subcellular location">
    <subcellularLocation>
        <location evidence="1">Cytoplasm</location>
    </subcellularLocation>
</comment>
<comment type="similarity">
    <text evidence="1">Belongs to the RraB family.</text>
</comment>
<sequence length="143" mass="16208">MADSKELAEQREETRLIIEELLEDGSDPDALYAIEHHISCENFETLEKAAVEVFKLGYEVTEPEEIEIESGEILVCFDAVSESGLNAELIDAQVEQLMNLAEKMGVYYDGWGTYFEDPDAEYDDEDGENEDDESESDKSSRLH</sequence>
<name>RRAB_PROMH</name>
<protein>
    <recommendedName>
        <fullName evidence="1">Regulator of ribonuclease activity B</fullName>
    </recommendedName>
</protein>
<dbReference type="EMBL" id="AM942759">
    <property type="protein sequence ID" value="CAR46779.1"/>
    <property type="molecule type" value="Genomic_DNA"/>
</dbReference>
<dbReference type="RefSeq" id="WP_004246194.1">
    <property type="nucleotide sequence ID" value="NC_010554.1"/>
</dbReference>
<dbReference type="SMR" id="B4F2M5"/>
<dbReference type="EnsemblBacteria" id="CAR46779">
    <property type="protein sequence ID" value="CAR46779"/>
    <property type="gene ID" value="PMI3458"/>
</dbReference>
<dbReference type="GeneID" id="6803031"/>
<dbReference type="KEGG" id="pmr:PMI3458"/>
<dbReference type="eggNOG" id="COG3076">
    <property type="taxonomic scope" value="Bacteria"/>
</dbReference>
<dbReference type="HOGENOM" id="CLU_128640_0_0_6"/>
<dbReference type="Proteomes" id="UP000008319">
    <property type="component" value="Chromosome"/>
</dbReference>
<dbReference type="GO" id="GO:0005737">
    <property type="term" value="C:cytoplasm"/>
    <property type="evidence" value="ECO:0007669"/>
    <property type="project" value="UniProtKB-SubCell"/>
</dbReference>
<dbReference type="GO" id="GO:0060698">
    <property type="term" value="F:endoribonuclease inhibitor activity"/>
    <property type="evidence" value="ECO:0007669"/>
    <property type="project" value="UniProtKB-UniRule"/>
</dbReference>
<dbReference type="GO" id="GO:0019899">
    <property type="term" value="F:enzyme binding"/>
    <property type="evidence" value="ECO:0007669"/>
    <property type="project" value="UniProtKB-UniRule"/>
</dbReference>
<dbReference type="Gene3D" id="3.30.70.970">
    <property type="entry name" value="RraB-like"/>
    <property type="match status" value="1"/>
</dbReference>
<dbReference type="HAMAP" id="MF_01888">
    <property type="entry name" value="RraB"/>
    <property type="match status" value="1"/>
</dbReference>
<dbReference type="InterPro" id="IPR016716">
    <property type="entry name" value="RraB"/>
</dbReference>
<dbReference type="InterPro" id="IPR036701">
    <property type="entry name" value="RraB-like_sf"/>
</dbReference>
<dbReference type="InterPro" id="IPR009671">
    <property type="entry name" value="RraB_dom"/>
</dbReference>
<dbReference type="NCBIfam" id="NF008393">
    <property type="entry name" value="PRK11191.1"/>
    <property type="match status" value="1"/>
</dbReference>
<dbReference type="Pfam" id="PF06877">
    <property type="entry name" value="RraB"/>
    <property type="match status" value="1"/>
</dbReference>
<dbReference type="PIRSF" id="PIRSF018193">
    <property type="entry name" value="UCP018193"/>
    <property type="match status" value="1"/>
</dbReference>
<dbReference type="SUPFAM" id="SSF89946">
    <property type="entry name" value="Hypothetical protein VC0424"/>
    <property type="match status" value="1"/>
</dbReference>